<proteinExistence type="inferred from homology"/>
<keyword id="KW-0091">Biomineralization</keyword>
<keyword id="KW-0106">Calcium</keyword>
<keyword id="KW-0165">Cleavage on pair of basic residues</keyword>
<keyword id="KW-1015">Disulfide bond</keyword>
<keyword id="KW-0301">Gamma-carboxyglutamic acid</keyword>
<keyword id="KW-0372">Hormone</keyword>
<keyword id="KW-0479">Metal-binding</keyword>
<keyword id="KW-1185">Reference proteome</keyword>
<keyword id="KW-0964">Secreted</keyword>
<keyword id="KW-0732">Signal</keyword>
<name>OSTCN_XENTR</name>
<organism>
    <name type="scientific">Xenopus tropicalis</name>
    <name type="common">Western clawed frog</name>
    <name type="synonym">Silurana tropicalis</name>
    <dbReference type="NCBI Taxonomy" id="8364"/>
    <lineage>
        <taxon>Eukaryota</taxon>
        <taxon>Metazoa</taxon>
        <taxon>Chordata</taxon>
        <taxon>Craniata</taxon>
        <taxon>Vertebrata</taxon>
        <taxon>Euteleostomi</taxon>
        <taxon>Amphibia</taxon>
        <taxon>Batrachia</taxon>
        <taxon>Anura</taxon>
        <taxon>Pipoidea</taxon>
        <taxon>Pipidae</taxon>
        <taxon>Xenopodinae</taxon>
        <taxon>Xenopus</taxon>
        <taxon>Silurana</taxon>
    </lineage>
</organism>
<sequence length="101" mass="11160">MKLAIVLLLLGLAVLCLGGKDSQHSASAGDSRSSEAFISRQDSANFARRHKRSYRYNVARGAAVTSPLESQREVCELNPDCDELADHIGFQEAYRRFYGPV</sequence>
<comment type="function">
    <text evidence="3">The carboxylated form is one of the main organic components of the bone matrix, which constitutes 1-2% of the total bone protein (By similarity). The carboxylated form binds strongly to apatite and calcium (By similarity).</text>
</comment>
<comment type="subcellular location">
    <subcellularLocation>
        <location evidence="3">Secreted</location>
    </subcellularLocation>
</comment>
<comment type="PTM">
    <text evidence="5">Gamma-carboxyglutamate residues are formed by vitamin K dependent carboxylation by GGCX. These residues are essential for the binding of calcium.</text>
</comment>
<comment type="similarity">
    <text evidence="6">Belongs to the osteocalcin/matrix Gla protein family.</text>
</comment>
<gene>
    <name type="primary">bglap</name>
</gene>
<protein>
    <recommendedName>
        <fullName>Osteocalcin</fullName>
    </recommendedName>
    <alternativeName>
        <fullName>Bone Gla protein</fullName>
        <shortName>BGP</shortName>
    </alternativeName>
    <alternativeName>
        <fullName>Gamma-carboxyglutamic acid-containing protein</fullName>
    </alternativeName>
</protein>
<accession>Q6DJ00</accession>
<reference key="1">
    <citation type="submission" date="2004-06" db="EMBL/GenBank/DDBJ databases">
        <authorList>
            <consortium name="NIH - Xenopus Gene Collection (XGC) project"/>
        </authorList>
    </citation>
    <scope>NUCLEOTIDE SEQUENCE [LARGE SCALE MRNA]</scope>
    <source>
        <tissue>Embryo</tissue>
    </source>
</reference>
<feature type="signal peptide" evidence="4">
    <location>
        <begin position="1"/>
        <end position="18"/>
    </location>
</feature>
<feature type="propeptide" id="PRO_0000011102" evidence="1">
    <location>
        <begin position="19"/>
        <end position="52"/>
    </location>
</feature>
<feature type="chain" id="PRO_0000011103" description="Osteocalcin">
    <location>
        <begin position="53"/>
        <end position="101"/>
    </location>
</feature>
<feature type="domain" description="Gla" evidence="5">
    <location>
        <begin position="53"/>
        <end position="99"/>
    </location>
</feature>
<feature type="binding site" evidence="2">
    <location>
        <position position="69"/>
    </location>
    <ligand>
        <name>Ca(2+)</name>
        <dbReference type="ChEBI" id="CHEBI:29108"/>
        <label>1</label>
    </ligand>
</feature>
<feature type="binding site" evidence="2">
    <location>
        <position position="73"/>
    </location>
    <ligand>
        <name>Ca(2+)</name>
        <dbReference type="ChEBI" id="CHEBI:29108"/>
        <label>2</label>
    </ligand>
</feature>
<feature type="binding site" evidence="2">
    <location>
        <position position="76"/>
    </location>
    <ligand>
        <name>Ca(2+)</name>
        <dbReference type="ChEBI" id="CHEBI:29108"/>
        <label>2</label>
    </ligand>
</feature>
<feature type="binding site" evidence="2">
    <location>
        <position position="76"/>
    </location>
    <ligand>
        <name>Ca(2+)</name>
        <dbReference type="ChEBI" id="CHEBI:29108"/>
        <label>3</label>
    </ligand>
</feature>
<feature type="binding site" evidence="2">
    <location>
        <position position="82"/>
    </location>
    <ligand>
        <name>Ca(2+)</name>
        <dbReference type="ChEBI" id="CHEBI:29108"/>
        <label>3</label>
    </ligand>
</feature>
<feature type="modified residue" description="4-carboxyglutamate" evidence="5">
    <location>
        <position position="69"/>
    </location>
</feature>
<feature type="modified residue" description="4-carboxyglutamate" evidence="5">
    <location>
        <position position="73"/>
    </location>
</feature>
<feature type="modified residue" description="4-carboxyglutamate" evidence="5">
    <location>
        <position position="76"/>
    </location>
</feature>
<feature type="disulfide bond" evidence="5">
    <location>
        <begin position="75"/>
        <end position="81"/>
    </location>
</feature>
<evidence type="ECO:0000250" key="1"/>
<evidence type="ECO:0000250" key="2">
    <source>
        <dbReference type="UniProtKB" id="P02820"/>
    </source>
</evidence>
<evidence type="ECO:0000250" key="3">
    <source>
        <dbReference type="UniProtKB" id="P86546"/>
    </source>
</evidence>
<evidence type="ECO:0000255" key="4"/>
<evidence type="ECO:0000255" key="5">
    <source>
        <dbReference type="PROSITE-ProRule" id="PRU00463"/>
    </source>
</evidence>
<evidence type="ECO:0000305" key="6"/>
<dbReference type="EMBL" id="BC075385">
    <property type="protein sequence ID" value="AAH75385.1"/>
    <property type="molecule type" value="mRNA"/>
</dbReference>
<dbReference type="RefSeq" id="NP_001006689.1">
    <property type="nucleotide sequence ID" value="NM_001006688.1"/>
</dbReference>
<dbReference type="SMR" id="Q6DJ00"/>
<dbReference type="FunCoup" id="Q6DJ00">
    <property type="interactions" value="94"/>
</dbReference>
<dbReference type="STRING" id="8364.ENSXETP00000024548"/>
<dbReference type="PaxDb" id="8364-ENSXETP00000005554"/>
<dbReference type="DNASU" id="448310"/>
<dbReference type="GeneID" id="448310"/>
<dbReference type="KEGG" id="xtr:448310"/>
<dbReference type="AGR" id="Xenbase:XB-GENE-1018467"/>
<dbReference type="CTD" id="632"/>
<dbReference type="Xenbase" id="XB-GENE-1018467">
    <property type="gene designation" value="bglap"/>
</dbReference>
<dbReference type="eggNOG" id="ENOG502S85I">
    <property type="taxonomic scope" value="Eukaryota"/>
</dbReference>
<dbReference type="InParanoid" id="Q6DJ00"/>
<dbReference type="OMA" id="REACELN"/>
<dbReference type="OrthoDB" id="9950568at2759"/>
<dbReference type="Reactome" id="R-XTR-159740">
    <property type="pathway name" value="Gamma-carboxylation of protein precursors"/>
</dbReference>
<dbReference type="Reactome" id="R-XTR-159763">
    <property type="pathway name" value="Transport of gamma-carboxylated protein precursors from the endoplasmic reticulum to the Golgi apparatus"/>
</dbReference>
<dbReference type="Reactome" id="R-XTR-159782">
    <property type="pathway name" value="Removal of aminoterminal propeptides from gamma-carboxylated proteins"/>
</dbReference>
<dbReference type="Proteomes" id="UP000008143">
    <property type="component" value="Chromosome 8"/>
</dbReference>
<dbReference type="Bgee" id="ENSXETG00000002605">
    <property type="expression patterns" value="Expressed in bone element and 5 other cell types or tissues"/>
</dbReference>
<dbReference type="GO" id="GO:0005576">
    <property type="term" value="C:extracellular region"/>
    <property type="evidence" value="ECO:0007669"/>
    <property type="project" value="UniProtKB-SubCell"/>
</dbReference>
<dbReference type="GO" id="GO:0005509">
    <property type="term" value="F:calcium ion binding"/>
    <property type="evidence" value="ECO:0007669"/>
    <property type="project" value="InterPro"/>
</dbReference>
<dbReference type="GO" id="GO:0005179">
    <property type="term" value="F:hormone activity"/>
    <property type="evidence" value="ECO:0000250"/>
    <property type="project" value="UniProtKB"/>
</dbReference>
<dbReference type="GO" id="GO:0008147">
    <property type="term" value="F:structural constituent of bone"/>
    <property type="evidence" value="ECO:0000250"/>
    <property type="project" value="UniProtKB"/>
</dbReference>
<dbReference type="GO" id="GO:0031214">
    <property type="term" value="P:biomineral tissue development"/>
    <property type="evidence" value="ECO:0007669"/>
    <property type="project" value="UniProtKB-KW"/>
</dbReference>
<dbReference type="GO" id="GO:0060348">
    <property type="term" value="P:bone development"/>
    <property type="evidence" value="ECO:0007669"/>
    <property type="project" value="InterPro"/>
</dbReference>
<dbReference type="GO" id="GO:0032869">
    <property type="term" value="P:cellular response to insulin stimulus"/>
    <property type="evidence" value="ECO:0000250"/>
    <property type="project" value="UniProtKB"/>
</dbReference>
<dbReference type="GO" id="GO:0042593">
    <property type="term" value="P:glucose homeostasis"/>
    <property type="evidence" value="ECO:0000250"/>
    <property type="project" value="UniProtKB"/>
</dbReference>
<dbReference type="GO" id="GO:1903011">
    <property type="term" value="P:negative regulation of bone development"/>
    <property type="evidence" value="ECO:0000250"/>
    <property type="project" value="UniProtKB"/>
</dbReference>
<dbReference type="GO" id="GO:0030500">
    <property type="term" value="P:regulation of bone mineralization"/>
    <property type="evidence" value="ECO:0007669"/>
    <property type="project" value="InterPro"/>
</dbReference>
<dbReference type="GO" id="GO:1900076">
    <property type="term" value="P:regulation of cellular response to insulin stimulus"/>
    <property type="evidence" value="ECO:0007669"/>
    <property type="project" value="InterPro"/>
</dbReference>
<dbReference type="GO" id="GO:0032571">
    <property type="term" value="P:response to vitamin K"/>
    <property type="evidence" value="ECO:0007669"/>
    <property type="project" value="InterPro"/>
</dbReference>
<dbReference type="GO" id="GO:0044342">
    <property type="term" value="P:type B pancreatic cell proliferation"/>
    <property type="evidence" value="ECO:0000250"/>
    <property type="project" value="UniProtKB"/>
</dbReference>
<dbReference type="InterPro" id="IPR035972">
    <property type="entry name" value="GLA-like_dom_SF"/>
</dbReference>
<dbReference type="InterPro" id="IPR000294">
    <property type="entry name" value="GLA_domain"/>
</dbReference>
<dbReference type="InterPro" id="IPR039176">
    <property type="entry name" value="Osteocalcin"/>
</dbReference>
<dbReference type="InterPro" id="IPR002384">
    <property type="entry name" value="Osteocalcin/MGP"/>
</dbReference>
<dbReference type="PANTHER" id="PTHR14235">
    <property type="entry name" value="OSTEOCALCIN"/>
    <property type="match status" value="1"/>
</dbReference>
<dbReference type="PANTHER" id="PTHR14235:SF0">
    <property type="entry name" value="OSTEOCALCIN"/>
    <property type="match status" value="1"/>
</dbReference>
<dbReference type="PRINTS" id="PR00002">
    <property type="entry name" value="GLABONE"/>
</dbReference>
<dbReference type="SMART" id="SM00069">
    <property type="entry name" value="GLA"/>
    <property type="match status" value="1"/>
</dbReference>
<dbReference type="SUPFAM" id="SSF57630">
    <property type="entry name" value="GLA-domain"/>
    <property type="match status" value="1"/>
</dbReference>
<dbReference type="PROSITE" id="PS00011">
    <property type="entry name" value="GLA_1"/>
    <property type="match status" value="1"/>
</dbReference>
<dbReference type="PROSITE" id="PS50998">
    <property type="entry name" value="GLA_2"/>
    <property type="match status" value="1"/>
</dbReference>